<gene>
    <name evidence="1" type="primary">gatB</name>
    <name type="ordered locus">Gura_4323</name>
</gene>
<proteinExistence type="inferred from homology"/>
<comment type="function">
    <text evidence="1">Allows the formation of correctly charged Asn-tRNA(Asn) or Gln-tRNA(Gln) through the transamidation of misacylated Asp-tRNA(Asn) or Glu-tRNA(Gln) in organisms which lack either or both of asparaginyl-tRNA or glutaminyl-tRNA synthetases. The reaction takes place in the presence of glutamine and ATP through an activated phospho-Asp-tRNA(Asn) or phospho-Glu-tRNA(Gln).</text>
</comment>
<comment type="catalytic activity">
    <reaction evidence="1">
        <text>L-glutamyl-tRNA(Gln) + L-glutamine + ATP + H2O = L-glutaminyl-tRNA(Gln) + L-glutamate + ADP + phosphate + H(+)</text>
        <dbReference type="Rhea" id="RHEA:17521"/>
        <dbReference type="Rhea" id="RHEA-COMP:9681"/>
        <dbReference type="Rhea" id="RHEA-COMP:9684"/>
        <dbReference type="ChEBI" id="CHEBI:15377"/>
        <dbReference type="ChEBI" id="CHEBI:15378"/>
        <dbReference type="ChEBI" id="CHEBI:29985"/>
        <dbReference type="ChEBI" id="CHEBI:30616"/>
        <dbReference type="ChEBI" id="CHEBI:43474"/>
        <dbReference type="ChEBI" id="CHEBI:58359"/>
        <dbReference type="ChEBI" id="CHEBI:78520"/>
        <dbReference type="ChEBI" id="CHEBI:78521"/>
        <dbReference type="ChEBI" id="CHEBI:456216"/>
    </reaction>
</comment>
<comment type="catalytic activity">
    <reaction evidence="1">
        <text>L-aspartyl-tRNA(Asn) + L-glutamine + ATP + H2O = L-asparaginyl-tRNA(Asn) + L-glutamate + ADP + phosphate + 2 H(+)</text>
        <dbReference type="Rhea" id="RHEA:14513"/>
        <dbReference type="Rhea" id="RHEA-COMP:9674"/>
        <dbReference type="Rhea" id="RHEA-COMP:9677"/>
        <dbReference type="ChEBI" id="CHEBI:15377"/>
        <dbReference type="ChEBI" id="CHEBI:15378"/>
        <dbReference type="ChEBI" id="CHEBI:29985"/>
        <dbReference type="ChEBI" id="CHEBI:30616"/>
        <dbReference type="ChEBI" id="CHEBI:43474"/>
        <dbReference type="ChEBI" id="CHEBI:58359"/>
        <dbReference type="ChEBI" id="CHEBI:78515"/>
        <dbReference type="ChEBI" id="CHEBI:78516"/>
        <dbReference type="ChEBI" id="CHEBI:456216"/>
    </reaction>
</comment>
<comment type="subunit">
    <text evidence="1">Heterotrimer of A, B and C subunits.</text>
</comment>
<comment type="similarity">
    <text evidence="1">Belongs to the GatB/GatE family. GatB subfamily.</text>
</comment>
<organism>
    <name type="scientific">Geotalea uraniireducens (strain Rf4)</name>
    <name type="common">Geobacter uraniireducens</name>
    <dbReference type="NCBI Taxonomy" id="351605"/>
    <lineage>
        <taxon>Bacteria</taxon>
        <taxon>Pseudomonadati</taxon>
        <taxon>Thermodesulfobacteriota</taxon>
        <taxon>Desulfuromonadia</taxon>
        <taxon>Geobacterales</taxon>
        <taxon>Geobacteraceae</taxon>
        <taxon>Geotalea</taxon>
    </lineage>
</organism>
<evidence type="ECO:0000255" key="1">
    <source>
        <dbReference type="HAMAP-Rule" id="MF_00121"/>
    </source>
</evidence>
<protein>
    <recommendedName>
        <fullName evidence="1">Aspartyl/glutamyl-tRNA(Asn/Gln) amidotransferase subunit B</fullName>
        <shortName evidence="1">Asp/Glu-ADT subunit B</shortName>
        <ecNumber evidence="1">6.3.5.-</ecNumber>
    </recommendedName>
</protein>
<sequence length="479" mass="52916">MKYQVVIGLEVHVQLLTNSKIFCGCSTRFGAEPNSQTCPVCLGMPGALPVLNKKVVEYAIRAGLATNCRIAPRSVFARKNYFYPDLPKGYQISQFELPICIDGHLDIEVEGGMKRIGITRIHMEEDAGKLVHADVPGVGDDSCVDLNRACTPLLEIVSEPDMRSADEAVAYLKKLHQIVVYLGISDGNMEEGSFRCDANVSVMPAGSDKFGTRTETKNVNSFKFVKQAIEYEIERQIEVIEEGGKIVQETRLFDPNTGSTRSMRGKEEAHDYRYFPDPDLVPLVIGNDWVEDARLSLPELPDAKRQRYTDELGLPVYDAEVLTATRELAGYFEACLALSPQPKPVANWVMGEVTRALNEENRSIADCPVTPPLLADLLRLIEKGTISGKIAKTVFDEMWRSGKAPEKIVEEKGLVQVSDTGAIEAIIDEVLAKEAGQVEEYRSGKDKLFGFFVGQVMRASKGKANPALVNEILLKKLNG</sequence>
<reference key="1">
    <citation type="submission" date="2007-05" db="EMBL/GenBank/DDBJ databases">
        <title>Complete sequence of Geobacter uraniireducens Rf4.</title>
        <authorList>
            <consortium name="US DOE Joint Genome Institute"/>
            <person name="Copeland A."/>
            <person name="Lucas S."/>
            <person name="Lapidus A."/>
            <person name="Barry K."/>
            <person name="Detter J.C."/>
            <person name="Glavina del Rio T."/>
            <person name="Hammon N."/>
            <person name="Israni S."/>
            <person name="Dalin E."/>
            <person name="Tice H."/>
            <person name="Pitluck S."/>
            <person name="Chertkov O."/>
            <person name="Brettin T."/>
            <person name="Bruce D."/>
            <person name="Han C."/>
            <person name="Schmutz J."/>
            <person name="Larimer F."/>
            <person name="Land M."/>
            <person name="Hauser L."/>
            <person name="Kyrpides N."/>
            <person name="Mikhailova N."/>
            <person name="Shelobolina E."/>
            <person name="Aklujkar M."/>
            <person name="Lovley D."/>
            <person name="Richardson P."/>
        </authorList>
    </citation>
    <scope>NUCLEOTIDE SEQUENCE [LARGE SCALE GENOMIC DNA]</scope>
    <source>
        <strain>ATCC BAA-1134 / JCM 13001 / Rf4</strain>
    </source>
</reference>
<feature type="chain" id="PRO_1000076161" description="Aspartyl/glutamyl-tRNA(Asn/Gln) amidotransferase subunit B">
    <location>
        <begin position="1"/>
        <end position="479"/>
    </location>
</feature>
<accession>A5G9J8</accession>
<name>GATB_GEOUR</name>
<keyword id="KW-0067">ATP-binding</keyword>
<keyword id="KW-0436">Ligase</keyword>
<keyword id="KW-0547">Nucleotide-binding</keyword>
<keyword id="KW-0648">Protein biosynthesis</keyword>
<keyword id="KW-1185">Reference proteome</keyword>
<dbReference type="EC" id="6.3.5.-" evidence="1"/>
<dbReference type="EMBL" id="CP000698">
    <property type="protein sequence ID" value="ABQ28466.1"/>
    <property type="molecule type" value="Genomic_DNA"/>
</dbReference>
<dbReference type="SMR" id="A5G9J8"/>
<dbReference type="STRING" id="351605.Gura_4323"/>
<dbReference type="KEGG" id="gur:Gura_4323"/>
<dbReference type="HOGENOM" id="CLU_019240_0_0_7"/>
<dbReference type="OrthoDB" id="9804078at2"/>
<dbReference type="Proteomes" id="UP000006695">
    <property type="component" value="Chromosome"/>
</dbReference>
<dbReference type="GO" id="GO:0050566">
    <property type="term" value="F:asparaginyl-tRNA synthase (glutamine-hydrolyzing) activity"/>
    <property type="evidence" value="ECO:0007669"/>
    <property type="project" value="RHEA"/>
</dbReference>
<dbReference type="GO" id="GO:0005524">
    <property type="term" value="F:ATP binding"/>
    <property type="evidence" value="ECO:0007669"/>
    <property type="project" value="UniProtKB-KW"/>
</dbReference>
<dbReference type="GO" id="GO:0050567">
    <property type="term" value="F:glutaminyl-tRNA synthase (glutamine-hydrolyzing) activity"/>
    <property type="evidence" value="ECO:0007669"/>
    <property type="project" value="UniProtKB-UniRule"/>
</dbReference>
<dbReference type="GO" id="GO:0070681">
    <property type="term" value="P:glutaminyl-tRNAGln biosynthesis via transamidation"/>
    <property type="evidence" value="ECO:0007669"/>
    <property type="project" value="TreeGrafter"/>
</dbReference>
<dbReference type="GO" id="GO:0006412">
    <property type="term" value="P:translation"/>
    <property type="evidence" value="ECO:0007669"/>
    <property type="project" value="UniProtKB-UniRule"/>
</dbReference>
<dbReference type="FunFam" id="1.10.10.410:FF:000001">
    <property type="entry name" value="Aspartyl/glutamyl-tRNA(Asn/Gln) amidotransferase subunit B"/>
    <property type="match status" value="1"/>
</dbReference>
<dbReference type="FunFam" id="1.10.150.380:FF:000001">
    <property type="entry name" value="Aspartyl/glutamyl-tRNA(Asn/Gln) amidotransferase subunit B"/>
    <property type="match status" value="1"/>
</dbReference>
<dbReference type="Gene3D" id="1.10.10.410">
    <property type="match status" value="1"/>
</dbReference>
<dbReference type="Gene3D" id="1.10.150.380">
    <property type="entry name" value="GatB domain, N-terminal subdomain"/>
    <property type="match status" value="1"/>
</dbReference>
<dbReference type="HAMAP" id="MF_00121">
    <property type="entry name" value="GatB"/>
    <property type="match status" value="1"/>
</dbReference>
<dbReference type="InterPro" id="IPR017959">
    <property type="entry name" value="Asn/Gln-tRNA_amidoTrfase_suB/E"/>
</dbReference>
<dbReference type="InterPro" id="IPR006075">
    <property type="entry name" value="Asn/Gln-tRNA_Trfase_suB/E_cat"/>
</dbReference>
<dbReference type="InterPro" id="IPR018027">
    <property type="entry name" value="Asn/Gln_amidotransferase"/>
</dbReference>
<dbReference type="InterPro" id="IPR003789">
    <property type="entry name" value="Asn/Gln_tRNA_amidoTrase-B-like"/>
</dbReference>
<dbReference type="InterPro" id="IPR004413">
    <property type="entry name" value="GatB"/>
</dbReference>
<dbReference type="InterPro" id="IPR042114">
    <property type="entry name" value="GatB_C_1"/>
</dbReference>
<dbReference type="InterPro" id="IPR023168">
    <property type="entry name" value="GatB_Yqey_C_2"/>
</dbReference>
<dbReference type="InterPro" id="IPR017958">
    <property type="entry name" value="Gln-tRNA_amidoTrfase_suB_CS"/>
</dbReference>
<dbReference type="InterPro" id="IPR014746">
    <property type="entry name" value="Gln_synth/guanido_kin_cat_dom"/>
</dbReference>
<dbReference type="NCBIfam" id="TIGR00133">
    <property type="entry name" value="gatB"/>
    <property type="match status" value="1"/>
</dbReference>
<dbReference type="NCBIfam" id="NF004012">
    <property type="entry name" value="PRK05477.1-2"/>
    <property type="match status" value="1"/>
</dbReference>
<dbReference type="NCBIfam" id="NF004014">
    <property type="entry name" value="PRK05477.1-4"/>
    <property type="match status" value="1"/>
</dbReference>
<dbReference type="NCBIfam" id="NF004015">
    <property type="entry name" value="PRK05477.1-5"/>
    <property type="match status" value="1"/>
</dbReference>
<dbReference type="PANTHER" id="PTHR11659">
    <property type="entry name" value="GLUTAMYL-TRNA GLN AMIDOTRANSFERASE SUBUNIT B MITOCHONDRIAL AND PROKARYOTIC PET112-RELATED"/>
    <property type="match status" value="1"/>
</dbReference>
<dbReference type="PANTHER" id="PTHR11659:SF0">
    <property type="entry name" value="GLUTAMYL-TRNA(GLN) AMIDOTRANSFERASE SUBUNIT B, MITOCHONDRIAL"/>
    <property type="match status" value="1"/>
</dbReference>
<dbReference type="Pfam" id="PF02934">
    <property type="entry name" value="GatB_N"/>
    <property type="match status" value="1"/>
</dbReference>
<dbReference type="Pfam" id="PF02637">
    <property type="entry name" value="GatB_Yqey"/>
    <property type="match status" value="1"/>
</dbReference>
<dbReference type="SMART" id="SM00845">
    <property type="entry name" value="GatB_Yqey"/>
    <property type="match status" value="1"/>
</dbReference>
<dbReference type="SUPFAM" id="SSF89095">
    <property type="entry name" value="GatB/YqeY motif"/>
    <property type="match status" value="1"/>
</dbReference>
<dbReference type="SUPFAM" id="SSF55931">
    <property type="entry name" value="Glutamine synthetase/guanido kinase"/>
    <property type="match status" value="1"/>
</dbReference>
<dbReference type="PROSITE" id="PS01234">
    <property type="entry name" value="GATB"/>
    <property type="match status" value="1"/>
</dbReference>